<proteinExistence type="inferred from homology"/>
<accession>Q6FVG5</accession>
<reference key="1">
    <citation type="journal article" date="2004" name="Nature">
        <title>Genome evolution in yeasts.</title>
        <authorList>
            <person name="Dujon B."/>
            <person name="Sherman D."/>
            <person name="Fischer G."/>
            <person name="Durrens P."/>
            <person name="Casaregola S."/>
            <person name="Lafontaine I."/>
            <person name="de Montigny J."/>
            <person name="Marck C."/>
            <person name="Neuveglise C."/>
            <person name="Talla E."/>
            <person name="Goffard N."/>
            <person name="Frangeul L."/>
            <person name="Aigle M."/>
            <person name="Anthouard V."/>
            <person name="Babour A."/>
            <person name="Barbe V."/>
            <person name="Barnay S."/>
            <person name="Blanchin S."/>
            <person name="Beckerich J.-M."/>
            <person name="Beyne E."/>
            <person name="Bleykasten C."/>
            <person name="Boisrame A."/>
            <person name="Boyer J."/>
            <person name="Cattolico L."/>
            <person name="Confanioleri F."/>
            <person name="de Daruvar A."/>
            <person name="Despons L."/>
            <person name="Fabre E."/>
            <person name="Fairhead C."/>
            <person name="Ferry-Dumazet H."/>
            <person name="Groppi A."/>
            <person name="Hantraye F."/>
            <person name="Hennequin C."/>
            <person name="Jauniaux N."/>
            <person name="Joyet P."/>
            <person name="Kachouri R."/>
            <person name="Kerrest A."/>
            <person name="Koszul R."/>
            <person name="Lemaire M."/>
            <person name="Lesur I."/>
            <person name="Ma L."/>
            <person name="Muller H."/>
            <person name="Nicaud J.-M."/>
            <person name="Nikolski M."/>
            <person name="Oztas S."/>
            <person name="Ozier-Kalogeropoulos O."/>
            <person name="Pellenz S."/>
            <person name="Potier S."/>
            <person name="Richard G.-F."/>
            <person name="Straub M.-L."/>
            <person name="Suleau A."/>
            <person name="Swennen D."/>
            <person name="Tekaia F."/>
            <person name="Wesolowski-Louvel M."/>
            <person name="Westhof E."/>
            <person name="Wirth B."/>
            <person name="Zeniou-Meyer M."/>
            <person name="Zivanovic Y."/>
            <person name="Bolotin-Fukuhara M."/>
            <person name="Thierry A."/>
            <person name="Bouchier C."/>
            <person name="Caudron B."/>
            <person name="Scarpelli C."/>
            <person name="Gaillardin C."/>
            <person name="Weissenbach J."/>
            <person name="Wincker P."/>
            <person name="Souciet J.-L."/>
        </authorList>
    </citation>
    <scope>NUCLEOTIDE SEQUENCE [LARGE SCALE GENOMIC DNA]</scope>
    <source>
        <strain>ATCC 2001 / BCRC 20586 / JCM 3761 / NBRC 0622 / NRRL Y-65 / CBS 138</strain>
    </source>
</reference>
<evidence type="ECO:0000250" key="1"/>
<evidence type="ECO:0000255" key="2">
    <source>
        <dbReference type="PROSITE-ProRule" id="PRU01185"/>
    </source>
</evidence>
<evidence type="ECO:0000256" key="3">
    <source>
        <dbReference type="SAM" id="MobiDB-lite"/>
    </source>
</evidence>
<organism>
    <name type="scientific">Candida glabrata (strain ATCC 2001 / BCRC 20586 / JCM 3761 / NBRC 0622 / NRRL Y-65 / CBS 138)</name>
    <name type="common">Yeast</name>
    <name type="synonym">Nakaseomyces glabratus</name>
    <dbReference type="NCBI Taxonomy" id="284593"/>
    <lineage>
        <taxon>Eukaryota</taxon>
        <taxon>Fungi</taxon>
        <taxon>Dikarya</taxon>
        <taxon>Ascomycota</taxon>
        <taxon>Saccharomycotina</taxon>
        <taxon>Saccharomycetes</taxon>
        <taxon>Saccharomycetales</taxon>
        <taxon>Saccharomycetaceae</taxon>
        <taxon>Nakaseomyces</taxon>
    </lineage>
</organism>
<name>CSN10_CANGA</name>
<dbReference type="EMBL" id="CR380951">
    <property type="protein sequence ID" value="CAG58698.1"/>
    <property type="molecule type" value="Genomic_DNA"/>
</dbReference>
<dbReference type="RefSeq" id="XP_445779.1">
    <property type="nucleotide sequence ID" value="XM_445779.1"/>
</dbReference>
<dbReference type="FunCoup" id="Q6FVG5">
    <property type="interactions" value="169"/>
</dbReference>
<dbReference type="STRING" id="284593.Q6FVG5"/>
<dbReference type="EnsemblFungi" id="CAGL0E02057g-T">
    <property type="protein sequence ID" value="CAGL0E02057g-T-p1"/>
    <property type="gene ID" value="CAGL0E02057g"/>
</dbReference>
<dbReference type="KEGG" id="cgr:2887398"/>
<dbReference type="CGD" id="CAL0128748">
    <property type="gene designation" value="CAGL0E02057g"/>
</dbReference>
<dbReference type="VEuPathDB" id="FungiDB:CAGL0E02057g"/>
<dbReference type="eggNOG" id="ENOG502RXR9">
    <property type="taxonomic scope" value="Eukaryota"/>
</dbReference>
<dbReference type="HOGENOM" id="CLU_031729_0_0_1"/>
<dbReference type="InParanoid" id="Q6FVG5"/>
<dbReference type="OMA" id="DFMMSDD"/>
<dbReference type="Proteomes" id="UP000002428">
    <property type="component" value="Chromosome E"/>
</dbReference>
<dbReference type="GO" id="GO:0008180">
    <property type="term" value="C:COP9 signalosome"/>
    <property type="evidence" value="ECO:0007669"/>
    <property type="project" value="UniProtKB-KW"/>
</dbReference>
<dbReference type="GO" id="GO:0005737">
    <property type="term" value="C:cytoplasm"/>
    <property type="evidence" value="ECO:0007669"/>
    <property type="project" value="UniProtKB-SubCell"/>
</dbReference>
<dbReference type="InterPro" id="IPR000717">
    <property type="entry name" value="PCI_dom"/>
</dbReference>
<dbReference type="PROSITE" id="PS50250">
    <property type="entry name" value="PCI"/>
    <property type="match status" value="1"/>
</dbReference>
<feature type="chain" id="PRO_0000121022" description="COP9 signalosome complex subunit 10">
    <location>
        <begin position="1"/>
        <end position="643"/>
    </location>
</feature>
<feature type="domain" description="PCI" evidence="2">
    <location>
        <begin position="331"/>
        <end position="517"/>
    </location>
</feature>
<feature type="region of interest" description="Disordered" evidence="3">
    <location>
        <begin position="1"/>
        <end position="37"/>
    </location>
</feature>
<feature type="region of interest" description="Disordered" evidence="3">
    <location>
        <begin position="573"/>
        <end position="594"/>
    </location>
</feature>
<feature type="compositionally biased region" description="Acidic residues" evidence="3">
    <location>
        <begin position="1"/>
        <end position="33"/>
    </location>
</feature>
<feature type="compositionally biased region" description="Polar residues" evidence="3">
    <location>
        <begin position="573"/>
        <end position="584"/>
    </location>
</feature>
<keyword id="KW-0963">Cytoplasm</keyword>
<keyword id="KW-0539">Nucleus</keyword>
<keyword id="KW-1185">Reference proteome</keyword>
<keyword id="KW-0736">Signalosome</keyword>
<protein>
    <recommendedName>
        <fullName>COP9 signalosome complex subunit 10</fullName>
    </recommendedName>
</protein>
<gene>
    <name type="primary">RRI2</name>
    <name type="synonym">CSN10</name>
    <name type="ordered locus">CAGL0E02057g</name>
</gene>
<comment type="function">
    <text evidence="1">Component of the COP9 signalosome (CSN) complex that acts as an regulator of the ubiquitin (Ubl) conjugation pathway by mediating the deneddylation of the cullin subunit of SCF-type E3 ubiquitin-protein ligase complexes. The CSN complex is involved in the regulation of the mating pheromone response (By similarity).</text>
</comment>
<comment type="subunit">
    <text>Component of a COP9 signalosome-like (CSN) complex.</text>
</comment>
<comment type="subcellular location">
    <subcellularLocation>
        <location evidence="1">Cytoplasm</location>
    </subcellularLocation>
    <subcellularLocation>
        <location evidence="1">Nucleus</location>
    </subcellularLocation>
</comment>
<sequence>MTDESDNYNDFMMSDEDMDSIEMEDEENDVEGDEGQRGGQEWVQNYEQGLSLWNDENYVAARQVFLKTLSMLVSEEELIEMRCKIHRQVLECWCKILMYGEPDNEQSTEIIADFRNFVELVNELHGKANCSLDLSSMFHHVTMDFMPNIYDRTFIPGITDDEESSKWAKMTFKTTILQILQGSWVCHTFPEVGLLLQQELHVLQAWIKTFDKERDLYAISESLRKDINTLNELQLILQCYIARYIEDQHLLCNEGEVFRMCLNQLDQKCNESLAVAQRSDINLILHFSKALFLILFELDQDDLGDGNKVTGSTCVRRFVTIHKFYQNIECCKEEFWECLKNLEELGTNKFRFERFMQIIVGGFVLCAMIMHRGSQTRLAGTSGNADINPFDYEQLRIAPDHIFVDKLRRIYDVFVGLQIQEMHSCLIELECIRAPLSRLFDQVCYLIQKRKLFSEIAPIYSCISIQDLRQKLQIDPSVPPTRDEILVHLMRYCMQDRGINFKLDLVADTVTFYSEQHSEPLHDAVFSETRMGHKSHKSSISKDRAIVEDIKAAHEMPEVEYAHDIGILESQVDSQSHSKSNTKSMSRHVSGHDPDSFGQDTISFFDTLRLARETYQGSNIDNSVYTIAKLTNEALQEISNDVR</sequence>